<protein>
    <recommendedName>
        <fullName evidence="1">UPF0434 protein lpl1884</fullName>
    </recommendedName>
</protein>
<comment type="similarity">
    <text evidence="1">Belongs to the UPF0434 family.</text>
</comment>
<gene>
    <name type="ordered locus">lpl1884</name>
</gene>
<sequence length="59" mass="6965">MDKKLLEILVCPLCKGKLLFKKHELICKFDRLAFPVRDDIPVMLEQEARLIPLEEKDKL</sequence>
<evidence type="ECO:0000255" key="1">
    <source>
        <dbReference type="HAMAP-Rule" id="MF_01187"/>
    </source>
</evidence>
<name>Y1884_LEGPL</name>
<proteinExistence type="inferred from homology"/>
<reference key="1">
    <citation type="journal article" date="2004" name="Nat. Genet.">
        <title>Evidence in the Legionella pneumophila genome for exploitation of host cell functions and high genome plasticity.</title>
        <authorList>
            <person name="Cazalet C."/>
            <person name="Rusniok C."/>
            <person name="Brueggemann H."/>
            <person name="Zidane N."/>
            <person name="Magnier A."/>
            <person name="Ma L."/>
            <person name="Tichit M."/>
            <person name="Jarraud S."/>
            <person name="Bouchier C."/>
            <person name="Vandenesch F."/>
            <person name="Kunst F."/>
            <person name="Etienne J."/>
            <person name="Glaser P."/>
            <person name="Buchrieser C."/>
        </authorList>
    </citation>
    <scope>NUCLEOTIDE SEQUENCE [LARGE SCALE GENOMIC DNA]</scope>
    <source>
        <strain>Lens</strain>
    </source>
</reference>
<organism>
    <name type="scientific">Legionella pneumophila (strain Lens)</name>
    <dbReference type="NCBI Taxonomy" id="297245"/>
    <lineage>
        <taxon>Bacteria</taxon>
        <taxon>Pseudomonadati</taxon>
        <taxon>Pseudomonadota</taxon>
        <taxon>Gammaproteobacteria</taxon>
        <taxon>Legionellales</taxon>
        <taxon>Legionellaceae</taxon>
        <taxon>Legionella</taxon>
    </lineage>
</organism>
<dbReference type="EMBL" id="CR628337">
    <property type="protein sequence ID" value="CAH16123.1"/>
    <property type="molecule type" value="Genomic_DNA"/>
</dbReference>
<dbReference type="RefSeq" id="WP_011215882.1">
    <property type="nucleotide sequence ID" value="NC_006369.1"/>
</dbReference>
<dbReference type="SMR" id="Q5WVD1"/>
<dbReference type="KEGG" id="lpf:lpl1884"/>
<dbReference type="LegioList" id="lpl1884"/>
<dbReference type="HOGENOM" id="CLU_155659_3_1_6"/>
<dbReference type="Proteomes" id="UP000002517">
    <property type="component" value="Chromosome"/>
</dbReference>
<dbReference type="GO" id="GO:0005829">
    <property type="term" value="C:cytosol"/>
    <property type="evidence" value="ECO:0007669"/>
    <property type="project" value="TreeGrafter"/>
</dbReference>
<dbReference type="FunFam" id="2.20.25.10:FF:000002">
    <property type="entry name" value="UPF0434 protein YcaR"/>
    <property type="match status" value="1"/>
</dbReference>
<dbReference type="Gene3D" id="2.20.25.10">
    <property type="match status" value="1"/>
</dbReference>
<dbReference type="HAMAP" id="MF_01187">
    <property type="entry name" value="UPF0434"/>
    <property type="match status" value="1"/>
</dbReference>
<dbReference type="InterPro" id="IPR005651">
    <property type="entry name" value="Trm112-like"/>
</dbReference>
<dbReference type="PANTHER" id="PTHR33505:SF4">
    <property type="entry name" value="PROTEIN PREY, MITOCHONDRIAL"/>
    <property type="match status" value="1"/>
</dbReference>
<dbReference type="PANTHER" id="PTHR33505">
    <property type="entry name" value="ZGC:162634"/>
    <property type="match status" value="1"/>
</dbReference>
<dbReference type="Pfam" id="PF03966">
    <property type="entry name" value="Trm112p"/>
    <property type="match status" value="1"/>
</dbReference>
<dbReference type="SUPFAM" id="SSF158997">
    <property type="entry name" value="Trm112p-like"/>
    <property type="match status" value="1"/>
</dbReference>
<accession>Q5WVD1</accession>
<feature type="chain" id="PRO_0000291104" description="UPF0434 protein lpl1884">
    <location>
        <begin position="1"/>
        <end position="59"/>
    </location>
</feature>